<keyword id="KW-0249">Electron transport</keyword>
<keyword id="KW-0472">Membrane</keyword>
<keyword id="KW-0496">Mitochondrion</keyword>
<keyword id="KW-0999">Mitochondrion inner membrane</keyword>
<keyword id="KW-0520">NAD</keyword>
<keyword id="KW-1185">Reference proteome</keyword>
<keyword id="KW-0679">Respiratory chain</keyword>
<keyword id="KW-1278">Translocase</keyword>
<keyword id="KW-0812">Transmembrane</keyword>
<keyword id="KW-1133">Transmembrane helix</keyword>
<keyword id="KW-0813">Transport</keyword>
<keyword id="KW-0830">Ubiquinone</keyword>
<geneLocation type="mitochondrion"/>
<accession>P48931</accession>
<name>NU4LM_FELCA</name>
<proteinExistence type="inferred from homology"/>
<feature type="chain" id="PRO_0000118423" description="NADH-ubiquinone oxidoreductase chain 4L">
    <location>
        <begin position="1"/>
        <end position="98"/>
    </location>
</feature>
<feature type="transmembrane region" description="Helical" evidence="3">
    <location>
        <begin position="1"/>
        <end position="21"/>
    </location>
</feature>
<feature type="transmembrane region" description="Helical" evidence="3">
    <location>
        <begin position="29"/>
        <end position="49"/>
    </location>
</feature>
<feature type="transmembrane region" description="Helical" evidence="3">
    <location>
        <begin position="61"/>
        <end position="81"/>
    </location>
</feature>
<sequence>MSMVYINIFLAFIMSLMGLLMYRSHLMSSLLCLEGMMLSLFIMMAVAILNNHLTLASMTPIILLVFAACEAALGLSLLVMVSNTYGTDYVQNLNLLQC</sequence>
<dbReference type="EC" id="7.1.1.2"/>
<dbReference type="EMBL" id="U20753">
    <property type="protein sequence ID" value="AAC48577.1"/>
    <property type="molecule type" value="Genomic_DNA"/>
</dbReference>
<dbReference type="PIR" id="T11410">
    <property type="entry name" value="T11410"/>
</dbReference>
<dbReference type="RefSeq" id="NP_008259.1">
    <property type="nucleotide sequence ID" value="NC_001700.1"/>
</dbReference>
<dbReference type="SMR" id="P48931"/>
<dbReference type="FunCoup" id="P48931">
    <property type="interactions" value="10"/>
</dbReference>
<dbReference type="STRING" id="9685.ENSFCAP00000025717"/>
<dbReference type="PaxDb" id="9685-ENSFCAP00000025717"/>
<dbReference type="Ensembl" id="ENSFCAT00000032654.1">
    <property type="protein sequence ID" value="ENSFCAP00000025717.1"/>
    <property type="gene ID" value="ENSFCAG00000032069.1"/>
</dbReference>
<dbReference type="GeneID" id="807937"/>
<dbReference type="KEGG" id="fca:807937"/>
<dbReference type="CTD" id="4539"/>
<dbReference type="eggNOG" id="KOG4669">
    <property type="taxonomic scope" value="Eukaryota"/>
</dbReference>
<dbReference type="GeneTree" id="ENSGT00390000004755"/>
<dbReference type="HOGENOM" id="CLU_182394_0_0_1"/>
<dbReference type="InParanoid" id="P48931"/>
<dbReference type="OMA" id="MYRSHLM"/>
<dbReference type="OrthoDB" id="6146597at2759"/>
<dbReference type="Proteomes" id="UP000011712">
    <property type="component" value="Mitochondrion"/>
</dbReference>
<dbReference type="Bgee" id="ENSFCAG00000032069">
    <property type="expression patterns" value="Expressed in uterus and 10 other cell types or tissues"/>
</dbReference>
<dbReference type="GO" id="GO:0005743">
    <property type="term" value="C:mitochondrial inner membrane"/>
    <property type="evidence" value="ECO:0000250"/>
    <property type="project" value="UniProtKB"/>
</dbReference>
<dbReference type="GO" id="GO:0045271">
    <property type="term" value="C:respiratory chain complex I"/>
    <property type="evidence" value="ECO:0000250"/>
    <property type="project" value="UniProtKB"/>
</dbReference>
<dbReference type="GO" id="GO:0008137">
    <property type="term" value="F:NADH dehydrogenase (ubiquinone) activity"/>
    <property type="evidence" value="ECO:0000250"/>
    <property type="project" value="UniProtKB"/>
</dbReference>
<dbReference type="GO" id="GO:0042773">
    <property type="term" value="P:ATP synthesis coupled electron transport"/>
    <property type="evidence" value="ECO:0007669"/>
    <property type="project" value="InterPro"/>
</dbReference>
<dbReference type="FunFam" id="1.10.287.3510:FF:000002">
    <property type="entry name" value="NADH-ubiquinone oxidoreductase chain 4L"/>
    <property type="match status" value="1"/>
</dbReference>
<dbReference type="Gene3D" id="1.10.287.3510">
    <property type="match status" value="1"/>
</dbReference>
<dbReference type="InterPro" id="IPR001133">
    <property type="entry name" value="NADH_UbQ_OxRdtase_chain4L/K"/>
</dbReference>
<dbReference type="InterPro" id="IPR039428">
    <property type="entry name" value="NUOK/Mnh_C1-like"/>
</dbReference>
<dbReference type="PANTHER" id="PTHR11434:SF0">
    <property type="entry name" value="NADH-UBIQUINONE OXIDOREDUCTASE CHAIN 4L"/>
    <property type="match status" value="1"/>
</dbReference>
<dbReference type="PANTHER" id="PTHR11434">
    <property type="entry name" value="NADH-UBIQUINONE OXIDOREDUCTASE SUBUNIT ND4L"/>
    <property type="match status" value="1"/>
</dbReference>
<dbReference type="Pfam" id="PF00420">
    <property type="entry name" value="Oxidored_q2"/>
    <property type="match status" value="1"/>
</dbReference>
<organism>
    <name type="scientific">Felis catus</name>
    <name type="common">Cat</name>
    <name type="synonym">Felis silvestris catus</name>
    <dbReference type="NCBI Taxonomy" id="9685"/>
    <lineage>
        <taxon>Eukaryota</taxon>
        <taxon>Metazoa</taxon>
        <taxon>Chordata</taxon>
        <taxon>Craniata</taxon>
        <taxon>Vertebrata</taxon>
        <taxon>Euteleostomi</taxon>
        <taxon>Mammalia</taxon>
        <taxon>Eutheria</taxon>
        <taxon>Laurasiatheria</taxon>
        <taxon>Carnivora</taxon>
        <taxon>Feliformia</taxon>
        <taxon>Felidae</taxon>
        <taxon>Felinae</taxon>
        <taxon>Felis</taxon>
    </lineage>
</organism>
<reference key="1">
    <citation type="journal article" date="1996" name="Genomics">
        <title>Complete nucleotide sequences of the domestic cat (Felis catus) mitochondrial genome and a transposed mtDNA tandem repeat (Numt) in the nuclear genome.</title>
        <authorList>
            <person name="Lopez J.V."/>
            <person name="Cevario S."/>
            <person name="O'Brien S.J."/>
        </authorList>
    </citation>
    <scope>NUCLEOTIDE SEQUENCE [LARGE SCALE GENOMIC DNA]</scope>
    <source>
        <strain evidence="5">Abyssinian</strain>
        <tissue>Blood</tissue>
    </source>
</reference>
<gene>
    <name type="primary">MT-ND4L</name>
    <name type="synonym">MTND4L</name>
    <name type="synonym">NADH4L</name>
    <name type="synonym">ND4L</name>
</gene>
<evidence type="ECO:0000250" key="1">
    <source>
        <dbReference type="UniProtKB" id="P03901"/>
    </source>
</evidence>
<evidence type="ECO:0000250" key="2">
    <source>
        <dbReference type="UniProtKB" id="P03902"/>
    </source>
</evidence>
<evidence type="ECO:0000255" key="3"/>
<evidence type="ECO:0000305" key="4"/>
<evidence type="ECO:0000312" key="5">
    <source>
        <dbReference type="Proteomes" id="UP000011712"/>
    </source>
</evidence>
<protein>
    <recommendedName>
        <fullName>NADH-ubiquinone oxidoreductase chain 4L</fullName>
        <ecNumber>7.1.1.2</ecNumber>
    </recommendedName>
    <alternativeName>
        <fullName>NADH dehydrogenase subunit 4L</fullName>
    </alternativeName>
</protein>
<comment type="function">
    <text evidence="1">Core subunit of the mitochondrial membrane respiratory chain NADH dehydrogenase (Complex I) which catalyzes electron transfer from NADH through the respiratory chain, using ubiquinone as an electron acceptor. Part of the enzyme membrane arm which is embedded in the lipid bilayer and involved in proton translocation.</text>
</comment>
<comment type="catalytic activity">
    <reaction evidence="1">
        <text>a ubiquinone + NADH + 5 H(+)(in) = a ubiquinol + NAD(+) + 4 H(+)(out)</text>
        <dbReference type="Rhea" id="RHEA:29091"/>
        <dbReference type="Rhea" id="RHEA-COMP:9565"/>
        <dbReference type="Rhea" id="RHEA-COMP:9566"/>
        <dbReference type="ChEBI" id="CHEBI:15378"/>
        <dbReference type="ChEBI" id="CHEBI:16389"/>
        <dbReference type="ChEBI" id="CHEBI:17976"/>
        <dbReference type="ChEBI" id="CHEBI:57540"/>
        <dbReference type="ChEBI" id="CHEBI:57945"/>
        <dbReference type="EC" id="7.1.1.2"/>
    </reaction>
    <physiologicalReaction direction="left-to-right" evidence="1">
        <dbReference type="Rhea" id="RHEA:29092"/>
    </physiologicalReaction>
</comment>
<comment type="subunit">
    <text evidence="2">Core subunit of respiratory chain NADH dehydrogenase (Complex I) which is composed of 45 different subunits.</text>
</comment>
<comment type="subcellular location">
    <subcellularLocation>
        <location evidence="2">Mitochondrion inner membrane</location>
        <topology evidence="3">Multi-pass membrane protein</topology>
    </subcellularLocation>
</comment>
<comment type="similarity">
    <text evidence="4">Belongs to the complex I subunit 4L family.</text>
</comment>